<protein>
    <recommendedName>
        <fullName>cAMP-dependent protein kinase type II-beta regulatory subunit</fullName>
    </recommendedName>
</protein>
<evidence type="ECO:0000250" key="1"/>
<evidence type="ECO:0000250" key="2">
    <source>
        <dbReference type="UniProtKB" id="P31323"/>
    </source>
</evidence>
<evidence type="ECO:0000256" key="3">
    <source>
        <dbReference type="SAM" id="MobiDB-lite"/>
    </source>
</evidence>
<evidence type="ECO:0000305" key="4"/>
<name>KAP3_BOVIN</name>
<accession>P31322</accession>
<reference key="1">
    <citation type="journal article" date="1990" name="J. Biol. Chem.">
        <title>Identification of the MAP2- and P75-binding domain in the regulatory subunit (RII beta) of type II cAMP-dependent protein kinase. Cloning and expression of the cDNA for bovine brain RII beta.</title>
        <authorList>
            <person name="Luo Z."/>
            <person name="Shafit-Zagardo B."/>
            <person name="Erlichman J."/>
        </authorList>
    </citation>
    <scope>NUCLEOTIDE SEQUENCE [MRNA]</scope>
    <source>
        <tissue>Brain</tissue>
    </source>
</reference>
<proteinExistence type="evidence at transcript level"/>
<organism>
    <name type="scientific">Bos taurus</name>
    <name type="common">Bovine</name>
    <dbReference type="NCBI Taxonomy" id="9913"/>
    <lineage>
        <taxon>Eukaryota</taxon>
        <taxon>Metazoa</taxon>
        <taxon>Chordata</taxon>
        <taxon>Craniata</taxon>
        <taxon>Vertebrata</taxon>
        <taxon>Euteleostomi</taxon>
        <taxon>Mammalia</taxon>
        <taxon>Eutheria</taxon>
        <taxon>Laurasiatheria</taxon>
        <taxon>Artiodactyla</taxon>
        <taxon>Ruminantia</taxon>
        <taxon>Pecora</taxon>
        <taxon>Bovidae</taxon>
        <taxon>Bovinae</taxon>
        <taxon>Bos</taxon>
    </lineage>
</organism>
<feature type="chain" id="PRO_0000205389" description="cAMP-dependent protein kinase type II-beta regulatory subunit">
    <location>
        <begin position="1"/>
        <end position="418"/>
    </location>
</feature>
<feature type="region of interest" description="Dimerization and phosphorylation">
    <location>
        <begin position="2"/>
        <end position="153"/>
    </location>
</feature>
<feature type="region of interest" description="Disordered" evidence="3">
    <location>
        <begin position="45"/>
        <end position="98"/>
    </location>
</feature>
<feature type="compositionally biased region" description="Basic and acidic residues" evidence="3">
    <location>
        <begin position="45"/>
        <end position="57"/>
    </location>
</feature>
<feature type="compositionally biased region" description="Acidic residues" evidence="3">
    <location>
        <begin position="86"/>
        <end position="96"/>
    </location>
</feature>
<feature type="binding site">
    <location>
        <begin position="154"/>
        <end position="275"/>
    </location>
    <ligand>
        <name>3',5'-cyclic AMP</name>
        <dbReference type="ChEBI" id="CHEBI:58165"/>
        <label>1</label>
    </ligand>
</feature>
<feature type="binding site">
    <location>
        <position position="223"/>
    </location>
    <ligand>
        <name>3',5'-cyclic AMP</name>
        <dbReference type="ChEBI" id="CHEBI:58165"/>
        <label>1</label>
    </ligand>
</feature>
<feature type="binding site">
    <location>
        <position position="232"/>
    </location>
    <ligand>
        <name>3',5'-cyclic AMP</name>
        <dbReference type="ChEBI" id="CHEBI:58165"/>
        <label>1</label>
    </ligand>
</feature>
<feature type="binding site">
    <location>
        <begin position="276"/>
        <end position="418"/>
    </location>
    <ligand>
        <name>3',5'-cyclic AMP</name>
        <dbReference type="ChEBI" id="CHEBI:58165"/>
        <label>2</label>
    </ligand>
</feature>
<feature type="binding site">
    <location>
        <position position="352"/>
    </location>
    <ligand>
        <name>3',5'-cyclic AMP</name>
        <dbReference type="ChEBI" id="CHEBI:58165"/>
        <label>2</label>
    </ligand>
</feature>
<feature type="binding site">
    <location>
        <position position="361"/>
    </location>
    <ligand>
        <name>3',5'-cyclic AMP</name>
        <dbReference type="ChEBI" id="CHEBI:58165"/>
        <label>2</label>
    </ligand>
</feature>
<feature type="modified residue" description="Phosphothreonine" evidence="2">
    <location>
        <position position="69"/>
    </location>
</feature>
<feature type="modified residue" description="Phosphoserine" evidence="2">
    <location>
        <position position="83"/>
    </location>
</feature>
<feature type="modified residue" description="Phosphoserine" evidence="2">
    <location>
        <position position="85"/>
    </location>
</feature>
<feature type="modified residue" description="Phosphoserine" evidence="2">
    <location>
        <position position="114"/>
    </location>
</feature>
<gene>
    <name type="primary">PRKAR2B</name>
</gene>
<sequence length="418" mass="46336">MSIEIPAGLTELLQGFTVEVLRHQPADLLEFALQHFTRLQEENERKGTARFGHEGRTWGDAGAAGGGGTPSKGVNFAEEPRHSDSENGEEEEEEAADAGAFNAPVINRFTRRASVCAEAYNPDEEEDDAESRIIHPKTDDQRNRLQEACKDILLFKNLDPEQMSQVLDAMFEKLVKEGEHVIDQGDDGDNFYVIDRGTFDIYVKCDGVGRCVGNYDNRGSFGELALMYNTPRAATITATSPGALWGLDRVTFRRIIVKNNAKKRKMYESFIESLPFLKSLEVSERLKVVDVIGTKVYNDGEQIIAQGDSADSFFIVESGEVKITMKRKGKSEVEENGAVEIARCSRGQYFGELALVTNKPRAASAHAIGTVKCLAMDVQAFERLLGPCMEIMKRNIATYEEQLVALFGTNMDIVEPTA</sequence>
<comment type="function">
    <text>Regulatory subunit of the cAMP-dependent protein kinases involved in cAMP signaling in cells. Type II regulatory chains mediate membrane association by binding to anchoring proteins, including the MAP2 kinase.</text>
</comment>
<comment type="subunit">
    <text evidence="2">The inactive form of the enzyme is composed of two regulatory chains and two catalytic chains. Activation by cAMP produces two active catalytic monomers and a regulatory dimer that binds four cAMP molecules. Interacts with PRKACA and PRKACB. Interacts with the phosphorylated form of PJA2. Forms a complex composed of PRKAR2B, GSK3B and GSKIP through GSKIP interaction; facilitates PKA-induced phosphorylation and regulates GSK3B activity.</text>
</comment>
<comment type="subcellular location">
    <subcellularLocation>
        <location evidence="1">Cytoplasm</location>
    </subcellularLocation>
    <subcellularLocation>
        <location evidence="1">Cell membrane</location>
    </subcellularLocation>
    <text evidence="1">Colocalizes with PJA2 in the cytoplasm and at the cell membrane.</text>
</comment>
<comment type="tissue specificity">
    <text>Four types of regulatory chains are found: I-alpha, I-beta, II-alpha, and II-beta. Their expression varies among tissues and is in some cases constitutive and in others inducible.</text>
</comment>
<comment type="PTM">
    <text>Phosphorylated by the activated catalytic chain.</text>
</comment>
<comment type="similarity">
    <text evidence="4">Belongs to the cAMP-dependent kinase regulatory chain family.</text>
</comment>
<keyword id="KW-0114">cAMP</keyword>
<keyword id="KW-0116">cAMP-binding</keyword>
<keyword id="KW-1003">Cell membrane</keyword>
<keyword id="KW-0963">Cytoplasm</keyword>
<keyword id="KW-0472">Membrane</keyword>
<keyword id="KW-0547">Nucleotide-binding</keyword>
<keyword id="KW-0597">Phosphoprotein</keyword>
<keyword id="KW-1185">Reference proteome</keyword>
<keyword id="KW-0677">Repeat</keyword>
<dbReference type="EMBL" id="J05692">
    <property type="protein sequence ID" value="AAA30755.1"/>
    <property type="molecule type" value="mRNA"/>
</dbReference>
<dbReference type="PIR" id="A36528">
    <property type="entry name" value="OKBOR2"/>
</dbReference>
<dbReference type="RefSeq" id="NP_777074.1">
    <property type="nucleotide sequence ID" value="NM_174649.2"/>
</dbReference>
<dbReference type="SMR" id="P31322"/>
<dbReference type="BioGRID" id="159716">
    <property type="interactions" value="1"/>
</dbReference>
<dbReference type="DIP" id="DIP-547N"/>
<dbReference type="FunCoup" id="P31322">
    <property type="interactions" value="1306"/>
</dbReference>
<dbReference type="STRING" id="9913.ENSBTAP00000019916"/>
<dbReference type="ChEMBL" id="CHEMBL2111446"/>
<dbReference type="DrugCentral" id="P31322"/>
<dbReference type="iPTMnet" id="P31322"/>
<dbReference type="PaxDb" id="9913-ENSBTAP00000019916"/>
<dbReference type="PeptideAtlas" id="P31322"/>
<dbReference type="GeneID" id="282463"/>
<dbReference type="KEGG" id="bta:282463"/>
<dbReference type="CTD" id="5577"/>
<dbReference type="eggNOG" id="KOG1113">
    <property type="taxonomic scope" value="Eukaryota"/>
</dbReference>
<dbReference type="InParanoid" id="P31322"/>
<dbReference type="OrthoDB" id="417078at2759"/>
<dbReference type="PRO" id="PR:P31322"/>
<dbReference type="Proteomes" id="UP000009136">
    <property type="component" value="Unplaced"/>
</dbReference>
<dbReference type="GO" id="GO:0005952">
    <property type="term" value="C:cAMP-dependent protein kinase complex"/>
    <property type="evidence" value="ECO:0000318"/>
    <property type="project" value="GO_Central"/>
</dbReference>
<dbReference type="GO" id="GO:0005829">
    <property type="term" value="C:cytosol"/>
    <property type="evidence" value="ECO:0000318"/>
    <property type="project" value="GO_Central"/>
</dbReference>
<dbReference type="GO" id="GO:0005886">
    <property type="term" value="C:plasma membrane"/>
    <property type="evidence" value="ECO:0007669"/>
    <property type="project" value="UniProtKB-SubCell"/>
</dbReference>
<dbReference type="GO" id="GO:0030552">
    <property type="term" value="F:cAMP binding"/>
    <property type="evidence" value="ECO:0000318"/>
    <property type="project" value="GO_Central"/>
</dbReference>
<dbReference type="GO" id="GO:0004862">
    <property type="term" value="F:cAMP-dependent protein kinase inhibitor activity"/>
    <property type="evidence" value="ECO:0000318"/>
    <property type="project" value="GO_Central"/>
</dbReference>
<dbReference type="GO" id="GO:0034236">
    <property type="term" value="F:protein kinase A catalytic subunit binding"/>
    <property type="evidence" value="ECO:0000318"/>
    <property type="project" value="GO_Central"/>
</dbReference>
<dbReference type="GO" id="GO:0007189">
    <property type="term" value="P:adenylate cyclase-activating G protein-coupled receptor signaling pathway"/>
    <property type="evidence" value="ECO:0000318"/>
    <property type="project" value="GO_Central"/>
</dbReference>
<dbReference type="CDD" id="cd00038">
    <property type="entry name" value="CAP_ED"/>
    <property type="match status" value="2"/>
</dbReference>
<dbReference type="CDD" id="cd12104">
    <property type="entry name" value="DD_RIIbeta_PKA"/>
    <property type="match status" value="1"/>
</dbReference>
<dbReference type="FunFam" id="2.60.120.10:FF:000017">
    <property type="entry name" value="cAMP-dependent protein kinase type II regulatory subunit"/>
    <property type="match status" value="1"/>
</dbReference>
<dbReference type="FunFam" id="1.20.890.10:FF:000002">
    <property type="entry name" value="cAMP-dependent protein kinase type II-alpha regulatory subunit"/>
    <property type="match status" value="1"/>
</dbReference>
<dbReference type="FunFam" id="2.60.120.10:FF:000027">
    <property type="entry name" value="Protein kinase cAMP-dependent type II regulatory subunit alpha"/>
    <property type="match status" value="1"/>
</dbReference>
<dbReference type="Gene3D" id="1.20.890.10">
    <property type="entry name" value="cAMP-dependent protein kinase regulatory subunit, dimerization-anchoring domain"/>
    <property type="match status" value="1"/>
</dbReference>
<dbReference type="Gene3D" id="2.60.120.10">
    <property type="entry name" value="Jelly Rolls"/>
    <property type="match status" value="2"/>
</dbReference>
<dbReference type="InterPro" id="IPR050503">
    <property type="entry name" value="cAMP-dep_PK_reg_su-like"/>
</dbReference>
<dbReference type="InterPro" id="IPR012198">
    <property type="entry name" value="cAMP_dep_PK_reg_su"/>
</dbReference>
<dbReference type="InterPro" id="IPR003117">
    <property type="entry name" value="cAMP_dep_PK_reg_su_I/II_a/b"/>
</dbReference>
<dbReference type="InterPro" id="IPR018488">
    <property type="entry name" value="cNMP-bd_CS"/>
</dbReference>
<dbReference type="InterPro" id="IPR000595">
    <property type="entry name" value="cNMP-bd_dom"/>
</dbReference>
<dbReference type="InterPro" id="IPR018490">
    <property type="entry name" value="cNMP-bd_dom_sf"/>
</dbReference>
<dbReference type="InterPro" id="IPR014710">
    <property type="entry name" value="RmlC-like_jellyroll"/>
</dbReference>
<dbReference type="PANTHER" id="PTHR11635">
    <property type="entry name" value="CAMP-DEPENDENT PROTEIN KINASE REGULATORY CHAIN"/>
    <property type="match status" value="1"/>
</dbReference>
<dbReference type="PANTHER" id="PTHR11635:SF156">
    <property type="entry name" value="CAMP-DEPENDENT PROTEIN KINASE TYPE II-BETA REGULATORY SUBUNIT"/>
    <property type="match status" value="1"/>
</dbReference>
<dbReference type="Pfam" id="PF00027">
    <property type="entry name" value="cNMP_binding"/>
    <property type="match status" value="2"/>
</dbReference>
<dbReference type="Pfam" id="PF02197">
    <property type="entry name" value="RIIa"/>
    <property type="match status" value="1"/>
</dbReference>
<dbReference type="PIRSF" id="PIRSF000548">
    <property type="entry name" value="PK_regulatory"/>
    <property type="match status" value="1"/>
</dbReference>
<dbReference type="PRINTS" id="PR00103">
    <property type="entry name" value="CAMPKINASE"/>
</dbReference>
<dbReference type="SMART" id="SM00100">
    <property type="entry name" value="cNMP"/>
    <property type="match status" value="2"/>
</dbReference>
<dbReference type="SMART" id="SM00394">
    <property type="entry name" value="RIIa"/>
    <property type="match status" value="1"/>
</dbReference>
<dbReference type="SUPFAM" id="SSF51206">
    <property type="entry name" value="cAMP-binding domain-like"/>
    <property type="match status" value="2"/>
</dbReference>
<dbReference type="SUPFAM" id="SSF47391">
    <property type="entry name" value="Dimerization-anchoring domain of cAMP-dependent PK regulatory subunit"/>
    <property type="match status" value="1"/>
</dbReference>
<dbReference type="PROSITE" id="PS00888">
    <property type="entry name" value="CNMP_BINDING_1"/>
    <property type="match status" value="2"/>
</dbReference>
<dbReference type="PROSITE" id="PS00889">
    <property type="entry name" value="CNMP_BINDING_2"/>
    <property type="match status" value="2"/>
</dbReference>
<dbReference type="PROSITE" id="PS50042">
    <property type="entry name" value="CNMP_BINDING_3"/>
    <property type="match status" value="2"/>
</dbReference>